<organism>
    <name type="scientific">Xylella fastidiosa (strain M23)</name>
    <dbReference type="NCBI Taxonomy" id="405441"/>
    <lineage>
        <taxon>Bacteria</taxon>
        <taxon>Pseudomonadati</taxon>
        <taxon>Pseudomonadota</taxon>
        <taxon>Gammaproteobacteria</taxon>
        <taxon>Lysobacterales</taxon>
        <taxon>Lysobacteraceae</taxon>
        <taxon>Xylella</taxon>
    </lineage>
</organism>
<proteinExistence type="inferred from homology"/>
<comment type="similarity">
    <text evidence="1">Belongs to the bacterial ribosomal protein bL32 family.</text>
</comment>
<feature type="chain" id="PRO_1000120192" description="Large ribosomal subunit protein bL32">
    <location>
        <begin position="1"/>
        <end position="64"/>
    </location>
</feature>
<feature type="region of interest" description="Disordered" evidence="2">
    <location>
        <begin position="1"/>
        <end position="23"/>
    </location>
</feature>
<accession>B2I598</accession>
<gene>
    <name evidence="1" type="primary">rpmF</name>
    <name type="ordered locus">XfasM23_1113</name>
</gene>
<keyword id="KW-0687">Ribonucleoprotein</keyword>
<keyword id="KW-0689">Ribosomal protein</keyword>
<evidence type="ECO:0000255" key="1">
    <source>
        <dbReference type="HAMAP-Rule" id="MF_00340"/>
    </source>
</evidence>
<evidence type="ECO:0000256" key="2">
    <source>
        <dbReference type="SAM" id="MobiDB-lite"/>
    </source>
</evidence>
<evidence type="ECO:0000305" key="3"/>
<protein>
    <recommendedName>
        <fullName evidence="1">Large ribosomal subunit protein bL32</fullName>
    </recommendedName>
    <alternativeName>
        <fullName evidence="3">50S ribosomal protein L32</fullName>
    </alternativeName>
</protein>
<dbReference type="EMBL" id="CP001011">
    <property type="protein sequence ID" value="ACB92541.1"/>
    <property type="molecule type" value="Genomic_DNA"/>
</dbReference>
<dbReference type="RefSeq" id="WP_004084879.1">
    <property type="nucleotide sequence ID" value="NC_010577.1"/>
</dbReference>
<dbReference type="SMR" id="B2I598"/>
<dbReference type="KEGG" id="xfn:XfasM23_1113"/>
<dbReference type="HOGENOM" id="CLU_129084_2_1_6"/>
<dbReference type="Proteomes" id="UP000001698">
    <property type="component" value="Chromosome"/>
</dbReference>
<dbReference type="GO" id="GO:0015934">
    <property type="term" value="C:large ribosomal subunit"/>
    <property type="evidence" value="ECO:0007669"/>
    <property type="project" value="InterPro"/>
</dbReference>
<dbReference type="GO" id="GO:0003735">
    <property type="term" value="F:structural constituent of ribosome"/>
    <property type="evidence" value="ECO:0007669"/>
    <property type="project" value="InterPro"/>
</dbReference>
<dbReference type="GO" id="GO:0006412">
    <property type="term" value="P:translation"/>
    <property type="evidence" value="ECO:0007669"/>
    <property type="project" value="UniProtKB-UniRule"/>
</dbReference>
<dbReference type="HAMAP" id="MF_00340">
    <property type="entry name" value="Ribosomal_bL32"/>
    <property type="match status" value="1"/>
</dbReference>
<dbReference type="InterPro" id="IPR002677">
    <property type="entry name" value="Ribosomal_bL32"/>
</dbReference>
<dbReference type="InterPro" id="IPR044957">
    <property type="entry name" value="Ribosomal_bL32_bact"/>
</dbReference>
<dbReference type="InterPro" id="IPR011332">
    <property type="entry name" value="Ribosomal_zn-bd"/>
</dbReference>
<dbReference type="NCBIfam" id="TIGR01031">
    <property type="entry name" value="rpmF_bact"/>
    <property type="match status" value="1"/>
</dbReference>
<dbReference type="PANTHER" id="PTHR35534">
    <property type="entry name" value="50S RIBOSOMAL PROTEIN L32"/>
    <property type="match status" value="1"/>
</dbReference>
<dbReference type="PANTHER" id="PTHR35534:SF1">
    <property type="entry name" value="LARGE RIBOSOMAL SUBUNIT PROTEIN BL32"/>
    <property type="match status" value="1"/>
</dbReference>
<dbReference type="Pfam" id="PF01783">
    <property type="entry name" value="Ribosomal_L32p"/>
    <property type="match status" value="1"/>
</dbReference>
<dbReference type="SUPFAM" id="SSF57829">
    <property type="entry name" value="Zn-binding ribosomal proteins"/>
    <property type="match status" value="1"/>
</dbReference>
<reference key="1">
    <citation type="journal article" date="2010" name="J. Bacteriol.">
        <title>Whole genome sequences of two Xylella fastidiosa strains (M12 and M23) causing almond leaf scorch disease in California.</title>
        <authorList>
            <person name="Chen J."/>
            <person name="Xie G."/>
            <person name="Han S."/>
            <person name="Chertkov O."/>
            <person name="Sims D."/>
            <person name="Civerolo E.L."/>
        </authorList>
    </citation>
    <scope>NUCLEOTIDE SEQUENCE [LARGE SCALE GENOMIC DNA]</scope>
    <source>
        <strain>M23</strain>
    </source>
</reference>
<name>RL32_XYLF2</name>
<sequence>MAVQKSRVTPSRRGQRRSHDALAAKKLSIDPTSGEVHIRHHVTADGYYRGKKVIAIKASVVEED</sequence>